<accession>Q9JPU9</accession>
<accession>A0A9K2PSH9</accession>
<keyword id="KW-0238">DNA-binding</keyword>
<keyword id="KW-0678">Repressor</keyword>
<keyword id="KW-0804">Transcription</keyword>
<keyword id="KW-0805">Transcription regulation</keyword>
<keyword id="KW-0843">Virulence</keyword>
<protein>
    <recommendedName>
        <fullName evidence="7">HTH-type transcriptional regulator CrgA</fullName>
    </recommendedName>
    <alternativeName>
        <fullName evidence="6">Contact-regulated gene A</fullName>
    </alternativeName>
</protein>
<proteinExistence type="evidence at protein level"/>
<name>CRGA_NEIM8</name>
<gene>
    <name evidence="6" type="primary">crgA</name>
    <name evidence="8" type="ordered locus">NMV_2045</name>
</gene>
<feature type="chain" id="PRO_0000458852" description="HTH-type transcriptional regulator CrgA">
    <location>
        <begin position="1"/>
        <end position="299"/>
    </location>
</feature>
<feature type="domain" description="HTH lysR-type" evidence="1">
    <location>
        <begin position="1"/>
        <end position="60"/>
    </location>
</feature>
<feature type="DNA-binding region" description="H-T-H motif" evidence="1">
    <location>
        <begin position="20"/>
        <end position="39"/>
    </location>
</feature>
<feature type="sequence conflict" description="In Ref. 1; AAF37819." evidence="7" ref="1">
    <original>A</original>
    <variation>G</variation>
    <location>
        <position position="70"/>
    </location>
</feature>
<organism>
    <name type="scientific">Neisseria meningitidis serogroup C (strain 8013)</name>
    <dbReference type="NCBI Taxonomy" id="604162"/>
    <lineage>
        <taxon>Bacteria</taxon>
        <taxon>Pseudomonadati</taxon>
        <taxon>Pseudomonadota</taxon>
        <taxon>Betaproteobacteria</taxon>
        <taxon>Neisseriales</taxon>
        <taxon>Neisseriaceae</taxon>
        <taxon>Neisseria</taxon>
    </lineage>
</organism>
<reference key="1">
    <citation type="journal article" date="2000" name="EMBO J.">
        <title>Intimate adhesion of Neisseria meningitidis to human epithelial cells is under the control of the crgA gene, a novel LysR-type transcriptional regulator.</title>
        <authorList>
            <person name="Deghmane A.E."/>
            <person name="Petit S."/>
            <person name="Topilko A."/>
            <person name="Pereira Y."/>
            <person name="Giorgini D."/>
            <person name="Larribe M."/>
            <person name="Taha M.K."/>
        </authorList>
    </citation>
    <scope>NUCLEOTIDE SEQUENCE [GENOMIC DNA]</scope>
    <scope>FUNCTION IN PILC1 AND CRGA REGULATION</scope>
    <scope>DNA-BINDING</scope>
    <scope>INDUCTION</scope>
    <scope>DISRUPTION PHENOTYPE</scope>
    <source>
        <strain>8013</strain>
    </source>
</reference>
<reference key="2">
    <citation type="journal article" date="2009" name="Genome Biol.">
        <title>NeMeSys: a biological resource for narrowing the gap between sequence and function in the human pathogen Neisseria meningitidis.</title>
        <authorList>
            <person name="Rusniok C."/>
            <person name="Vallenet D."/>
            <person name="Floquet S."/>
            <person name="Ewles H."/>
            <person name="Mouze-Soulama C."/>
            <person name="Brown D."/>
            <person name="Lajus A."/>
            <person name="Buchrieser C."/>
            <person name="Medigue C."/>
            <person name="Glaser P."/>
            <person name="Pelicic V."/>
        </authorList>
    </citation>
    <scope>NUCLEOTIDE SEQUENCE [LARGE SCALE GENOMIC DNA]</scope>
    <source>
        <strain>8013</strain>
    </source>
</reference>
<reference key="3">
    <citation type="journal article" date="2002" name="Mol. Microbiol.">
        <title>Down-regulation of pili and capsule of Neisseria meningitidis upon contact with epithelial cells is mediated by CrgA regulatory protein.</title>
        <authorList>
            <person name="Deghmane A.E."/>
            <person name="Giorgini D."/>
            <person name="Larribe M."/>
            <person name="Alonso J.M."/>
            <person name="Taha M.K."/>
        </authorList>
    </citation>
    <scope>FUNCTION IN PILE AND SIA REGULATION</scope>
    <scope>DNA-BINDING</scope>
    <source>
        <strain>8013</strain>
    </source>
</reference>
<reference key="4">
    <citation type="journal article" date="2003" name="Mol. Microbiol.">
        <title>The Neisseria meningitidis adhesion regulatory protein CrgA acts through oligomerization and interaction with RNA polymerase.</title>
        <authorList>
            <person name="Deghmane A.E."/>
            <person name="Taha M.K."/>
        </authorList>
    </citation>
    <scope>FUNCTION</scope>
    <scope>DNA-BINDING</scope>
    <scope>SUBUNIT</scope>
    <scope>DOMAIN</scope>
    <scope>DISRUPTION PHENOTYPE</scope>
    <source>
        <strain>8013</strain>
    </source>
</reference>
<reference key="5">
    <citation type="journal article" date="2004" name="Mol. Microbiol.">
        <title>Analysis in vitro and in vivo of the transcriptional regulator CrgA of Neisseria meningitidis upon contact with target cells.</title>
        <authorList>
            <person name="Deghmane A.E."/>
            <person name="Giorgini D."/>
            <person name="Maigre L."/>
            <person name="Taha M.K."/>
        </authorList>
    </citation>
    <scope>FUNCTION</scope>
    <scope>DNA-BINDING</scope>
    <scope>INDUCTION</scope>
    <scope>DOMAIN</scope>
    <source>
        <strain>8013</strain>
    </source>
</reference>
<dbReference type="EMBL" id="AF190471">
    <property type="protein sequence ID" value="AAF37819.1"/>
    <property type="molecule type" value="Genomic_DNA"/>
</dbReference>
<dbReference type="EMBL" id="FM999788">
    <property type="protein sequence ID" value="CAX50816.1"/>
    <property type="molecule type" value="Genomic_DNA"/>
</dbReference>
<dbReference type="RefSeq" id="WP_002256041.1">
    <property type="nucleotide sequence ID" value="NC_017501.1"/>
</dbReference>
<dbReference type="SMR" id="Q9JPU9"/>
<dbReference type="KEGG" id="nmt:NMV_2045"/>
<dbReference type="Proteomes" id="UP000002076">
    <property type="component" value="Chromosome"/>
</dbReference>
<dbReference type="GO" id="GO:0003700">
    <property type="term" value="F:DNA-binding transcription factor activity"/>
    <property type="evidence" value="ECO:0007669"/>
    <property type="project" value="InterPro"/>
</dbReference>
<dbReference type="GO" id="GO:0043565">
    <property type="term" value="F:sequence-specific DNA binding"/>
    <property type="evidence" value="ECO:0007669"/>
    <property type="project" value="TreeGrafter"/>
</dbReference>
<dbReference type="GO" id="GO:0006351">
    <property type="term" value="P:DNA-templated transcription"/>
    <property type="evidence" value="ECO:0007669"/>
    <property type="project" value="TreeGrafter"/>
</dbReference>
<dbReference type="CDD" id="cd08478">
    <property type="entry name" value="PBP2_CrgA"/>
    <property type="match status" value="1"/>
</dbReference>
<dbReference type="FunFam" id="1.10.10.10:FF:000001">
    <property type="entry name" value="LysR family transcriptional regulator"/>
    <property type="match status" value="1"/>
</dbReference>
<dbReference type="FunFam" id="3.40.190.10:FF:000126">
    <property type="entry name" value="Transcriptional regulator, LysR family"/>
    <property type="match status" value="1"/>
</dbReference>
<dbReference type="Gene3D" id="3.40.190.10">
    <property type="entry name" value="Periplasmic binding protein-like II"/>
    <property type="match status" value="2"/>
</dbReference>
<dbReference type="Gene3D" id="1.10.10.10">
    <property type="entry name" value="Winged helix-like DNA-binding domain superfamily/Winged helix DNA-binding domain"/>
    <property type="match status" value="1"/>
</dbReference>
<dbReference type="InterPro" id="IPR048071">
    <property type="entry name" value="CrgA-like_PBP2"/>
</dbReference>
<dbReference type="InterPro" id="IPR005119">
    <property type="entry name" value="LysR_subst-bd"/>
</dbReference>
<dbReference type="InterPro" id="IPR000847">
    <property type="entry name" value="Tscrpt_reg_HTH_LysR"/>
</dbReference>
<dbReference type="InterPro" id="IPR036388">
    <property type="entry name" value="WH-like_DNA-bd_sf"/>
</dbReference>
<dbReference type="InterPro" id="IPR036390">
    <property type="entry name" value="WH_DNA-bd_sf"/>
</dbReference>
<dbReference type="InterPro" id="IPR049755">
    <property type="entry name" value="YafC/CrgA"/>
</dbReference>
<dbReference type="NCBIfam" id="NF040888">
    <property type="entry name" value="trans_reg_YafC"/>
    <property type="match status" value="1"/>
</dbReference>
<dbReference type="PANTHER" id="PTHR30537">
    <property type="entry name" value="HTH-TYPE TRANSCRIPTIONAL REGULATOR"/>
    <property type="match status" value="1"/>
</dbReference>
<dbReference type="PANTHER" id="PTHR30537:SF20">
    <property type="entry name" value="TRANSCRIPTIONAL REGULATORY PROTEIN"/>
    <property type="match status" value="1"/>
</dbReference>
<dbReference type="Pfam" id="PF00126">
    <property type="entry name" value="HTH_1"/>
    <property type="match status" value="1"/>
</dbReference>
<dbReference type="Pfam" id="PF03466">
    <property type="entry name" value="LysR_substrate"/>
    <property type="match status" value="1"/>
</dbReference>
<dbReference type="PRINTS" id="PR00039">
    <property type="entry name" value="HTHLYSR"/>
</dbReference>
<dbReference type="SUPFAM" id="SSF53850">
    <property type="entry name" value="Periplasmic binding protein-like II"/>
    <property type="match status" value="1"/>
</dbReference>
<dbReference type="SUPFAM" id="SSF46785">
    <property type="entry name" value="Winged helix' DNA-binding domain"/>
    <property type="match status" value="1"/>
</dbReference>
<dbReference type="PROSITE" id="PS50931">
    <property type="entry name" value="HTH_LYSR"/>
    <property type="match status" value="1"/>
</dbReference>
<comment type="function">
    <text evidence="2 3 4 5">Involved in the regulation of bacterial adhesion to host epithelial cells (PubMed:10698947, PubMed:11952904). May play a central regulatory role in meningococcal adhesion, particularly in switching from initial adhesion to intimate adhesion by downregulating the bacterial surface structures that hinder this adhesion (PubMed:11952904). During intimate adhesion, negatively regulates the expression of pilC1, encoding a pilus-associated protein, pilE, encoding the pilin, and sia genes, encoding the capsule (PubMed:10698947, PubMed:11952904). Also negatively regulates its own expression (PubMed:10698947, PubMed:15255902). May also regulate other genes that are involved in intimate adhesion (PubMed:11952904). Binds specifically to the promoter region of pilC1 and crgA (both harboring a CREN element), and pilE and sia (both devoid of a CREN element) (PubMed:10698947, PubMed:11952904, PubMed:15255902). Acts through interaction with RNA polymerase (RNAP) (PubMed:12492859, PubMed:15255902). Interaction with RNAP leads to the production of short abortive transcripts, suggesting that CrgA may act by preventing RNAP from clearing the promoter (PubMed:15255902).</text>
</comment>
<comment type="subunit">
    <text evidence="4">Forms oligomers (PubMed:12492859). Oligomerization is required for DNA binding (PubMed:12492859).</text>
</comment>
<comment type="induction">
    <text evidence="2 5">Expression is transiently induced upon contact with target cells (PubMed:10698947). Negatively autoregulated (PubMed:10698947, PubMed:15255902).</text>
</comment>
<comment type="domain">
    <text evidence="4 5">The N-terminal region is directly involved in DNA binding through a helix-turn-helix motif (PubMed:12492859). The C-terminal region is also involved in DNA binding, probably by permitting the oligomerization of the protein (PubMed:12492859). The C-terminal region interacts with RNA polymerase (PubMed:12492859, PubMed:15255902).</text>
</comment>
<comment type="disruption phenotype">
    <text evidence="2 4">Inactivation of the gene provokes a dramatic reduction in bacterial adhesion to epithelial cells (PubMed:10698947, PubMed:12492859). The mutant is unable to undergo intimate adhesion to epithelial cells or to provoke effacing of microvilli on infected cells (PubMed:10698947).</text>
</comment>
<comment type="similarity">
    <text evidence="7">Belongs to the LysR transcriptional regulatory family.</text>
</comment>
<comment type="caution">
    <text evidence="7">In strain MC58 (AC Q9JXW7), CrgA was reported to control the expression of its upstream gene, mdaB, but not the expression of the pili and capsule genes.</text>
</comment>
<evidence type="ECO:0000255" key="1">
    <source>
        <dbReference type="PROSITE-ProRule" id="PRU00253"/>
    </source>
</evidence>
<evidence type="ECO:0000269" key="2">
    <source>
    </source>
</evidence>
<evidence type="ECO:0000269" key="3">
    <source>
    </source>
</evidence>
<evidence type="ECO:0000269" key="4">
    <source>
    </source>
</evidence>
<evidence type="ECO:0000269" key="5">
    <source>
    </source>
</evidence>
<evidence type="ECO:0000303" key="6">
    <source>
    </source>
</evidence>
<evidence type="ECO:0000305" key="7"/>
<evidence type="ECO:0000312" key="8">
    <source>
        <dbReference type="EMBL" id="CAX50816.1"/>
    </source>
</evidence>
<sequence>MKTNSEELTVFVQVVESGSFSRAAEQLAMANSAVSRIVKRLEEKLGVNLLNRTTRQLSLTEEGAQYFRRAQRILQEMAAAETEMLAVHEIPQGVLRVDSAMPMVLHLLAPLATKFNERYPHIRLSLVSSEGYINLIERKVDIALRAGELDDSGLRARHLFDSRFRVIASPEYLAKHGTPQSAEELAGHQCLGFTEPGSLNTWAVLDAQGNPYKISPHFTASSGEILRSLCLSGCGIACLSDFLVDNDIAEGKLIPLLAEQTSDKTHPFNAVYYSDKAVNLRLRVFLDFLVEELGNNLCG</sequence>